<organism>
    <name type="scientific">Haemophilus influenzae (strain ATCC 51907 / DSM 11121 / KW20 / Rd)</name>
    <dbReference type="NCBI Taxonomy" id="71421"/>
    <lineage>
        <taxon>Bacteria</taxon>
        <taxon>Pseudomonadati</taxon>
        <taxon>Pseudomonadota</taxon>
        <taxon>Gammaproteobacteria</taxon>
        <taxon>Pasteurellales</taxon>
        <taxon>Pasteurellaceae</taxon>
        <taxon>Haemophilus</taxon>
    </lineage>
</organism>
<feature type="chain" id="PRO_0000078054" description="Uncharacterized protein HI_1419">
    <location>
        <begin position="1"/>
        <end position="99"/>
    </location>
</feature>
<reference key="1">
    <citation type="journal article" date="1995" name="Science">
        <title>Whole-genome random sequencing and assembly of Haemophilus influenzae Rd.</title>
        <authorList>
            <person name="Fleischmann R.D."/>
            <person name="Adams M.D."/>
            <person name="White O."/>
            <person name="Clayton R.A."/>
            <person name="Kirkness E.F."/>
            <person name="Kerlavage A.R."/>
            <person name="Bult C.J."/>
            <person name="Tomb J.-F."/>
            <person name="Dougherty B.A."/>
            <person name="Merrick J.M."/>
            <person name="McKenney K."/>
            <person name="Sutton G.G."/>
            <person name="FitzHugh W."/>
            <person name="Fields C.A."/>
            <person name="Gocayne J.D."/>
            <person name="Scott J.D."/>
            <person name="Shirley R."/>
            <person name="Liu L.-I."/>
            <person name="Glodek A."/>
            <person name="Kelley J.M."/>
            <person name="Weidman J.F."/>
            <person name="Phillips C.A."/>
            <person name="Spriggs T."/>
            <person name="Hedblom E."/>
            <person name="Cotton M.D."/>
            <person name="Utterback T.R."/>
            <person name="Hanna M.C."/>
            <person name="Nguyen D.T."/>
            <person name="Saudek D.M."/>
            <person name="Brandon R.C."/>
            <person name="Fine L.D."/>
            <person name="Fritchman J.L."/>
            <person name="Fuhrmann J.L."/>
            <person name="Geoghagen N.S.M."/>
            <person name="Gnehm C.L."/>
            <person name="McDonald L.A."/>
            <person name="Small K.V."/>
            <person name="Fraser C.M."/>
            <person name="Smith H.O."/>
            <person name="Venter J.C."/>
        </authorList>
    </citation>
    <scope>NUCLEOTIDE SEQUENCE [LARGE SCALE GENOMIC DNA]</scope>
    <source>
        <strain>ATCC 51907 / DSM 11121 / KW20 / Rd</strain>
    </source>
</reference>
<keyword id="KW-1185">Reference proteome</keyword>
<accession>P44190</accession>
<name>Y1419_HAEIN</name>
<sequence>MTIQIKTTLTFDSWLSKLKNLRAKAKINARIKRLQFGNFGDIKSVNDGIFELRIDEGQGYRVYLKNQNGVLVILLCGGDKSTQDKDIKQAKLLAQELGL</sequence>
<protein>
    <recommendedName>
        <fullName>Uncharacterized protein HI_1419</fullName>
    </recommendedName>
</protein>
<gene>
    <name type="ordered locus">HI_1419</name>
</gene>
<proteinExistence type="predicted"/>
<dbReference type="EMBL" id="L42023">
    <property type="protein sequence ID" value="AAC23069.1"/>
    <property type="molecule type" value="Genomic_DNA"/>
</dbReference>
<dbReference type="PIR" id="B64029">
    <property type="entry name" value="B64029"/>
</dbReference>
<dbReference type="RefSeq" id="NP_439569.1">
    <property type="nucleotide sequence ID" value="NC_000907.1"/>
</dbReference>
<dbReference type="SMR" id="P44190"/>
<dbReference type="EnsemblBacteria" id="AAC23069">
    <property type="protein sequence ID" value="AAC23069"/>
    <property type="gene ID" value="HI_1419"/>
</dbReference>
<dbReference type="KEGG" id="hin:HI_1419"/>
<dbReference type="PATRIC" id="fig|71421.8.peg.1477"/>
<dbReference type="eggNOG" id="COG3657">
    <property type="taxonomic scope" value="Bacteria"/>
</dbReference>
<dbReference type="HOGENOM" id="CLU_152445_0_1_6"/>
<dbReference type="OrthoDB" id="9800258at2"/>
<dbReference type="PhylomeDB" id="P44190"/>
<dbReference type="BioCyc" id="HINF71421:G1GJ1-1442-MONOMER"/>
<dbReference type="Proteomes" id="UP000000579">
    <property type="component" value="Chromosome"/>
</dbReference>
<dbReference type="InterPro" id="IPR009241">
    <property type="entry name" value="HigB-like"/>
</dbReference>
<dbReference type="InterPro" id="IPR014056">
    <property type="entry name" value="TypeIITA-like_toxin_pred"/>
</dbReference>
<dbReference type="NCBIfam" id="TIGR02683">
    <property type="entry name" value="upstrm_HI1419"/>
    <property type="match status" value="1"/>
</dbReference>
<dbReference type="PANTHER" id="PTHR41791">
    <property type="entry name" value="SSL7039 PROTEIN"/>
    <property type="match status" value="1"/>
</dbReference>
<dbReference type="PANTHER" id="PTHR41791:SF1">
    <property type="entry name" value="SSL7039 PROTEIN"/>
    <property type="match status" value="1"/>
</dbReference>
<dbReference type="Pfam" id="PF05973">
    <property type="entry name" value="Gp49"/>
    <property type="match status" value="1"/>
</dbReference>
<dbReference type="PIRSF" id="PIRSF028744">
    <property type="entry name" value="Addict_mod_HI1419"/>
    <property type="match status" value="1"/>
</dbReference>